<reference key="1">
    <citation type="submission" date="2007-06" db="EMBL/GenBank/DDBJ databases">
        <authorList>
            <person name="Dodson R.J."/>
            <person name="Harkins D."/>
            <person name="Paulsen I.T."/>
        </authorList>
    </citation>
    <scope>NUCLEOTIDE SEQUENCE [LARGE SCALE GENOMIC DNA]</scope>
    <source>
        <strain>DSM 24068 / PA7</strain>
    </source>
</reference>
<keyword id="KW-0028">Amino-acid biosynthesis</keyword>
<keyword id="KW-0032">Aminotransferase</keyword>
<keyword id="KW-0963">Cytoplasm</keyword>
<keyword id="KW-0663">Pyridoxal phosphate</keyword>
<keyword id="KW-0664">Pyridoxine biosynthesis</keyword>
<keyword id="KW-0718">Serine biosynthesis</keyword>
<keyword id="KW-0808">Transferase</keyword>
<evidence type="ECO:0000255" key="1">
    <source>
        <dbReference type="HAMAP-Rule" id="MF_00160"/>
    </source>
</evidence>
<name>SERC_PSEP7</name>
<comment type="function">
    <text evidence="1">Catalyzes the reversible conversion of 3-phosphohydroxypyruvate to phosphoserine and of 3-hydroxy-2-oxo-4-phosphonooxybutanoate to phosphohydroxythreonine.</text>
</comment>
<comment type="catalytic activity">
    <reaction evidence="1">
        <text>O-phospho-L-serine + 2-oxoglutarate = 3-phosphooxypyruvate + L-glutamate</text>
        <dbReference type="Rhea" id="RHEA:14329"/>
        <dbReference type="ChEBI" id="CHEBI:16810"/>
        <dbReference type="ChEBI" id="CHEBI:18110"/>
        <dbReference type="ChEBI" id="CHEBI:29985"/>
        <dbReference type="ChEBI" id="CHEBI:57524"/>
        <dbReference type="EC" id="2.6.1.52"/>
    </reaction>
</comment>
<comment type="catalytic activity">
    <reaction evidence="1">
        <text>4-(phosphooxy)-L-threonine + 2-oxoglutarate = (R)-3-hydroxy-2-oxo-4-phosphooxybutanoate + L-glutamate</text>
        <dbReference type="Rhea" id="RHEA:16573"/>
        <dbReference type="ChEBI" id="CHEBI:16810"/>
        <dbReference type="ChEBI" id="CHEBI:29985"/>
        <dbReference type="ChEBI" id="CHEBI:58452"/>
        <dbReference type="ChEBI" id="CHEBI:58538"/>
        <dbReference type="EC" id="2.6.1.52"/>
    </reaction>
</comment>
<comment type="cofactor">
    <cofactor evidence="1">
        <name>pyridoxal 5'-phosphate</name>
        <dbReference type="ChEBI" id="CHEBI:597326"/>
    </cofactor>
    <text evidence="1">Binds 1 pyridoxal phosphate per subunit.</text>
</comment>
<comment type="pathway">
    <text evidence="1">Amino-acid biosynthesis; L-serine biosynthesis; L-serine from 3-phospho-D-glycerate: step 2/3.</text>
</comment>
<comment type="pathway">
    <text evidence="1">Cofactor biosynthesis; pyridoxine 5'-phosphate biosynthesis; pyridoxine 5'-phosphate from D-erythrose 4-phosphate: step 3/5.</text>
</comment>
<comment type="subunit">
    <text evidence="1">Homodimer.</text>
</comment>
<comment type="subcellular location">
    <subcellularLocation>
        <location evidence="1">Cytoplasm</location>
    </subcellularLocation>
</comment>
<comment type="similarity">
    <text evidence="1">Belongs to the class-V pyridoxal-phosphate-dependent aminotransferase family. SerC subfamily.</text>
</comment>
<organism>
    <name type="scientific">Pseudomonas paraeruginosa (strain DSM 24068 / PA7)</name>
    <name type="common">Pseudomonas aeruginosa (strain PA7)</name>
    <dbReference type="NCBI Taxonomy" id="381754"/>
    <lineage>
        <taxon>Bacteria</taxon>
        <taxon>Pseudomonadati</taxon>
        <taxon>Pseudomonadota</taxon>
        <taxon>Gammaproteobacteria</taxon>
        <taxon>Pseudomonadales</taxon>
        <taxon>Pseudomonadaceae</taxon>
        <taxon>Pseudomonas</taxon>
        <taxon>Pseudomonas paraeruginosa</taxon>
    </lineage>
</organism>
<sequence length="361" mass="39999">MSKRAFNFCAGPAALPDAVLQRAQAELLDWRGKGLSVMEMSHRSDDYVAIASKAEHDLRDLLDIPSDYKVLFLQGGASQQFAEIPLNLLPEDGVADYIDTGIWSKKAIEEARRYGRVNVAASAKEYDYFAIPGQNEWNLTKDAAYVHYASNETIGGLEFDWIPETGGVPLVTDMSSDILSRPLDVSRFGLIYAGAQKNIGPSGLVVVIVREDLLGRARSACPTMLNYKIAADNGSMYNTPATYSWYLSGLVFEWLKEQGGVTAMERRNRAKKDLLYKTIDASDFYTNPIQPSARSWMNVPFRLADERLDKPFLEGAEARGLLNLKGHRSVGGMRASIYNALGLDAVEALVAYMAEFEKERG</sequence>
<proteinExistence type="inferred from homology"/>
<protein>
    <recommendedName>
        <fullName evidence="1">Phosphoserine aminotransferase</fullName>
        <ecNumber evidence="1">2.6.1.52</ecNumber>
    </recommendedName>
    <alternativeName>
        <fullName evidence="1">Phosphohydroxythreonine aminotransferase</fullName>
        <shortName evidence="1">PSAT</shortName>
    </alternativeName>
</protein>
<feature type="chain" id="PRO_1000123470" description="Phosphoserine aminotransferase">
    <location>
        <begin position="1"/>
        <end position="361"/>
    </location>
</feature>
<feature type="binding site" evidence="1">
    <location>
        <position position="43"/>
    </location>
    <ligand>
        <name>L-glutamate</name>
        <dbReference type="ChEBI" id="CHEBI:29985"/>
    </ligand>
</feature>
<feature type="binding site" evidence="1">
    <location>
        <begin position="77"/>
        <end position="78"/>
    </location>
    <ligand>
        <name>pyridoxal 5'-phosphate</name>
        <dbReference type="ChEBI" id="CHEBI:597326"/>
    </ligand>
</feature>
<feature type="binding site" evidence="1">
    <location>
        <position position="103"/>
    </location>
    <ligand>
        <name>pyridoxal 5'-phosphate</name>
        <dbReference type="ChEBI" id="CHEBI:597326"/>
    </ligand>
</feature>
<feature type="binding site" evidence="1">
    <location>
        <position position="153"/>
    </location>
    <ligand>
        <name>pyridoxal 5'-phosphate</name>
        <dbReference type="ChEBI" id="CHEBI:597326"/>
    </ligand>
</feature>
<feature type="binding site" evidence="1">
    <location>
        <position position="173"/>
    </location>
    <ligand>
        <name>pyridoxal 5'-phosphate</name>
        <dbReference type="ChEBI" id="CHEBI:597326"/>
    </ligand>
</feature>
<feature type="binding site" evidence="1">
    <location>
        <position position="196"/>
    </location>
    <ligand>
        <name>pyridoxal 5'-phosphate</name>
        <dbReference type="ChEBI" id="CHEBI:597326"/>
    </ligand>
</feature>
<feature type="binding site" evidence="1">
    <location>
        <begin position="238"/>
        <end position="239"/>
    </location>
    <ligand>
        <name>pyridoxal 5'-phosphate</name>
        <dbReference type="ChEBI" id="CHEBI:597326"/>
    </ligand>
</feature>
<feature type="modified residue" description="N6-(pyridoxal phosphate)lysine" evidence="1">
    <location>
        <position position="197"/>
    </location>
</feature>
<gene>
    <name evidence="1" type="primary">serC</name>
    <name type="ordered locus">PSPA7_1962</name>
</gene>
<accession>A6V2Q8</accession>
<dbReference type="EC" id="2.6.1.52" evidence="1"/>
<dbReference type="EMBL" id="CP000744">
    <property type="protein sequence ID" value="ABR80801.1"/>
    <property type="molecule type" value="Genomic_DNA"/>
</dbReference>
<dbReference type="RefSeq" id="WP_012075020.1">
    <property type="nucleotide sequence ID" value="NC_009656.1"/>
</dbReference>
<dbReference type="SMR" id="A6V2Q8"/>
<dbReference type="KEGG" id="pap:PSPA7_1962"/>
<dbReference type="HOGENOM" id="CLU_034866_0_2_6"/>
<dbReference type="UniPathway" id="UPA00135">
    <property type="reaction ID" value="UER00197"/>
</dbReference>
<dbReference type="UniPathway" id="UPA00244">
    <property type="reaction ID" value="UER00311"/>
</dbReference>
<dbReference type="Proteomes" id="UP000001582">
    <property type="component" value="Chromosome"/>
</dbReference>
<dbReference type="GO" id="GO:0005737">
    <property type="term" value="C:cytoplasm"/>
    <property type="evidence" value="ECO:0007669"/>
    <property type="project" value="UniProtKB-SubCell"/>
</dbReference>
<dbReference type="GO" id="GO:0004648">
    <property type="term" value="F:O-phospho-L-serine:2-oxoglutarate aminotransferase activity"/>
    <property type="evidence" value="ECO:0007669"/>
    <property type="project" value="UniProtKB-UniRule"/>
</dbReference>
<dbReference type="GO" id="GO:0030170">
    <property type="term" value="F:pyridoxal phosphate binding"/>
    <property type="evidence" value="ECO:0007669"/>
    <property type="project" value="UniProtKB-UniRule"/>
</dbReference>
<dbReference type="GO" id="GO:0006564">
    <property type="term" value="P:L-serine biosynthetic process"/>
    <property type="evidence" value="ECO:0007669"/>
    <property type="project" value="UniProtKB-UniRule"/>
</dbReference>
<dbReference type="GO" id="GO:0008615">
    <property type="term" value="P:pyridoxine biosynthetic process"/>
    <property type="evidence" value="ECO:0007669"/>
    <property type="project" value="UniProtKB-UniRule"/>
</dbReference>
<dbReference type="CDD" id="cd00611">
    <property type="entry name" value="PSAT_like"/>
    <property type="match status" value="1"/>
</dbReference>
<dbReference type="FunFam" id="3.40.640.10:FF:000010">
    <property type="entry name" value="Phosphoserine aminotransferase"/>
    <property type="match status" value="1"/>
</dbReference>
<dbReference type="FunFam" id="3.90.1150.10:FF:000006">
    <property type="entry name" value="Phosphoserine aminotransferase"/>
    <property type="match status" value="1"/>
</dbReference>
<dbReference type="Gene3D" id="3.90.1150.10">
    <property type="entry name" value="Aspartate Aminotransferase, domain 1"/>
    <property type="match status" value="1"/>
</dbReference>
<dbReference type="Gene3D" id="3.40.640.10">
    <property type="entry name" value="Type I PLP-dependent aspartate aminotransferase-like (Major domain)"/>
    <property type="match status" value="1"/>
</dbReference>
<dbReference type="HAMAP" id="MF_00160">
    <property type="entry name" value="SerC_aminotrans_5"/>
    <property type="match status" value="1"/>
</dbReference>
<dbReference type="InterPro" id="IPR000192">
    <property type="entry name" value="Aminotrans_V_dom"/>
</dbReference>
<dbReference type="InterPro" id="IPR022278">
    <property type="entry name" value="Pser_aminoTfrase"/>
</dbReference>
<dbReference type="InterPro" id="IPR015424">
    <property type="entry name" value="PyrdxlP-dep_Trfase"/>
</dbReference>
<dbReference type="InterPro" id="IPR015421">
    <property type="entry name" value="PyrdxlP-dep_Trfase_major"/>
</dbReference>
<dbReference type="InterPro" id="IPR015422">
    <property type="entry name" value="PyrdxlP-dep_Trfase_small"/>
</dbReference>
<dbReference type="NCBIfam" id="NF003764">
    <property type="entry name" value="PRK05355.1"/>
    <property type="match status" value="1"/>
</dbReference>
<dbReference type="NCBIfam" id="TIGR01364">
    <property type="entry name" value="serC_1"/>
    <property type="match status" value="1"/>
</dbReference>
<dbReference type="PANTHER" id="PTHR43247">
    <property type="entry name" value="PHOSPHOSERINE AMINOTRANSFERASE"/>
    <property type="match status" value="1"/>
</dbReference>
<dbReference type="PANTHER" id="PTHR43247:SF1">
    <property type="entry name" value="PHOSPHOSERINE AMINOTRANSFERASE"/>
    <property type="match status" value="1"/>
</dbReference>
<dbReference type="Pfam" id="PF00266">
    <property type="entry name" value="Aminotran_5"/>
    <property type="match status" value="1"/>
</dbReference>
<dbReference type="PIRSF" id="PIRSF000525">
    <property type="entry name" value="SerC"/>
    <property type="match status" value="1"/>
</dbReference>
<dbReference type="SUPFAM" id="SSF53383">
    <property type="entry name" value="PLP-dependent transferases"/>
    <property type="match status" value="1"/>
</dbReference>